<accession>P68831</accession>
<accession>P29100</accession>
<accession>Q89618</accession>
<accession>Q96632</accession>
<organismHost>
    <name type="scientific">Costelytra zealandica</name>
    <dbReference type="NCBI Taxonomy" id="50579"/>
</organismHost>
<organismHost>
    <name type="scientific">Galleria mellonella</name>
    <name type="common">Greater wax moth</name>
    <dbReference type="NCBI Taxonomy" id="7137"/>
</organismHost>
<organismHost>
    <name type="scientific">Hordeum vulgare</name>
    <name type="common">Barley</name>
    <dbReference type="NCBI Taxonomy" id="4513"/>
</organismHost>
<organismHost>
    <name type="scientific">Saccharomyces cerevisiae</name>
    <name type="common">Baker's yeast</name>
    <dbReference type="NCBI Taxonomy" id="4932"/>
</organismHost>
<dbReference type="EMBL" id="X77156">
    <property type="protein sequence ID" value="CAA54401.1"/>
    <property type="molecule type" value="Genomic_RNA"/>
</dbReference>
<dbReference type="PIR" id="S41398">
    <property type="entry name" value="S41398"/>
</dbReference>
<dbReference type="RefSeq" id="NP_689446.1">
    <property type="nucleotide sequence ID" value="NC_004146.1"/>
</dbReference>
<dbReference type="PDB" id="2AZ0">
    <property type="method" value="X-ray"/>
    <property type="resolution" value="2.60 A"/>
    <property type="chains" value="A/B=1-73"/>
</dbReference>
<dbReference type="PDB" id="2AZ2">
    <property type="method" value="X-ray"/>
    <property type="resolution" value="2.60 A"/>
    <property type="chains" value="A/B=1-73"/>
</dbReference>
<dbReference type="PDB" id="2B9Z">
    <property type="method" value="NMR"/>
    <property type="chains" value="A/B=1-72"/>
</dbReference>
<dbReference type="PDBsum" id="2AZ0"/>
<dbReference type="PDBsum" id="2AZ2"/>
<dbReference type="PDBsum" id="2B9Z"/>
<dbReference type="SMR" id="P68831"/>
<dbReference type="DIP" id="DIP-60497N"/>
<dbReference type="KEGG" id="vg:1724847"/>
<dbReference type="OrthoDB" id="24098at10239"/>
<dbReference type="EvolutionaryTrace" id="P68831"/>
<dbReference type="Proteomes" id="UP000203899">
    <property type="component" value="Genome"/>
</dbReference>
<dbReference type="GO" id="GO:0044164">
    <property type="term" value="C:host cell cytosol"/>
    <property type="evidence" value="ECO:0000314"/>
    <property type="project" value="FlyBase"/>
</dbReference>
<dbReference type="GO" id="GO:0033650">
    <property type="term" value="C:host cell mitochondrion"/>
    <property type="evidence" value="ECO:0007669"/>
    <property type="project" value="UniProtKB-SubCell"/>
</dbReference>
<dbReference type="GO" id="GO:0003723">
    <property type="term" value="F:RNA binding"/>
    <property type="evidence" value="ECO:0007669"/>
    <property type="project" value="UniProtKB-KW"/>
</dbReference>
<dbReference type="GO" id="GO:0052170">
    <property type="term" value="P:symbiont-mediated suppression of host innate immune response"/>
    <property type="evidence" value="ECO:0007669"/>
    <property type="project" value="UniProtKB-KW"/>
</dbReference>
<dbReference type="Gene3D" id="1.10.287.1060">
    <property type="entry name" value="ESAT-6-like"/>
    <property type="match status" value="1"/>
</dbReference>
<dbReference type="InterPro" id="IPR024377">
    <property type="entry name" value="RNA-bd_B2"/>
</dbReference>
<dbReference type="InterPro" id="IPR037209">
    <property type="entry name" value="RNA-bd_B2_sf"/>
</dbReference>
<dbReference type="Pfam" id="PF11473">
    <property type="entry name" value="B2"/>
    <property type="match status" value="1"/>
</dbReference>
<dbReference type="SUPFAM" id="SSF140506">
    <property type="entry name" value="FHV B2 protein-like"/>
    <property type="match status" value="1"/>
</dbReference>
<protein>
    <recommendedName>
        <fullName>Protein B2</fullName>
    </recommendedName>
</protein>
<name>B2_FHV</name>
<comment type="function">
    <text evidence="1 2">Binds double-strand RNA (dsRNA) with high affinity. Suppresses the host RNA silencing-based antiviral response.</text>
</comment>
<comment type="subunit">
    <text evidence="2 3 4">Homodimer (PubMed:16228003, PubMed:16270100). Interacts with RNA-directed RNA polymerase (PubMed:36560715).</text>
</comment>
<comment type="subcellular location">
    <subcellularLocation>
        <location evidence="4">Host mitochondrion</location>
    </subcellularLocation>
</comment>
<comment type="developmental stage">
    <text>Expressed at high levels early in the viral replication cycle.</text>
</comment>
<comment type="domain">
    <text evidence="3">The dsRNA-binding region is required for suppression of RNA silencing. The N-terminus is involved in homodimerization (PubMed:16270100). The alpha2 helices of the dimer bind parallel to the stem of the dsRNA helix (PubMed:16270100).</text>
</comment>
<comment type="miscellaneous">
    <text>Encoded on a subgenomic RNA (RNA3) synthesized during replication and which is co-terminal with RNA1.</text>
</comment>
<comment type="similarity">
    <text evidence="5">Belongs to the nodaviridae B2 protein family.</text>
</comment>
<reference key="1">
    <citation type="submission" date="1994-01" db="EMBL/GenBank/DDBJ databases">
        <title>Near identity in the polymerase gene of two serologically distinct nodaviruses.</title>
        <authorList>
            <person name="Dasgupta R."/>
        </authorList>
    </citation>
    <scope>NUCLEOTIDE SEQUENCE [GENOMIC RNA]</scope>
</reference>
<reference key="2">
    <citation type="journal article" date="2004" name="Proc. Natl. Acad. Sci. U.S.A.">
        <title>Interferon antagonist proteins of influenza and vaccinia viruses are suppressors of RNA silencing.</title>
        <authorList>
            <person name="Li W.-X."/>
            <person name="Li H."/>
            <person name="Lu R."/>
            <person name="Li F."/>
            <person name="Dus M."/>
            <person name="Atkinson P."/>
            <person name="Brydon E.W.A."/>
            <person name="Johnson K.L."/>
            <person name="Garcia-Sastre A."/>
            <person name="Ball L.A."/>
            <person name="Palese P."/>
            <person name="Ding S.-W."/>
        </authorList>
    </citation>
    <scope>FUNCTION</scope>
</reference>
<reference key="3">
    <citation type="journal article" date="2022" name="Viruses">
        <title>Multifunctional protein A is the only viral protein required for Nodavirus RNA replication crown formation.</title>
        <authorList>
            <person name="den Boon J.A."/>
            <person name="Zhan H."/>
            <person name="Unchwaniwala N."/>
            <person name="Horswill M."/>
            <person name="Slavik K."/>
            <person name="Pennington J."/>
            <person name="Navine A."/>
            <person name="Ahlquist P."/>
        </authorList>
    </citation>
    <scope>INTERACTION WITH RNA-DIRECTED RNA POLYMERASE</scope>
    <scope>SUBCELLULAR LOCATION</scope>
</reference>
<reference evidence="6 7" key="4">
    <citation type="journal article" date="2005" name="Nat. Struct. Mol. Biol.">
        <title>Dual modes of RNA-silencing suppression by Flock House virus protein B2.</title>
        <authorList>
            <person name="Chao J.A."/>
            <person name="Lee J.H."/>
            <person name="Chapados B.R."/>
            <person name="Debler E.W."/>
            <person name="Schneemann A."/>
            <person name="Williamson J.R."/>
        </authorList>
    </citation>
    <scope>X-RAY CRYSTALLOGRAPHY (2.60 ANGSTROMS) OF 1-73</scope>
    <scope>FUNCTION</scope>
    <scope>SUBUNIT</scope>
    <scope>RNA-BINDING</scope>
</reference>
<reference evidence="8" key="5">
    <citation type="journal article" date="2005" name="EMBO Rep.">
        <title>The structure of the flock house virus B2 protein, a viral suppressor of RNA interference, shows a novel mode of double-stranded RNA recognition.</title>
        <authorList>
            <person name="Lingel A."/>
            <person name="Simon B."/>
            <person name="Izaurralde E."/>
            <person name="Sattler M."/>
        </authorList>
    </citation>
    <scope>STRUCTURE BY NMR OF 1-72</scope>
    <scope>SUBUNIT</scope>
</reference>
<sequence>MPSKLALIQELPDRIQTAVEAAMGMSYQDAPNNVRRDLDNLHACLNKAKLTVSRMVTSLLEKPSVVAYLEGKAPEEAKPTLEERLRKLELSHSLPTTGSDPPPAKL</sequence>
<gene>
    <name type="primary">B2</name>
</gene>
<keyword id="KW-0002">3D-structure</keyword>
<keyword id="KW-1045">Host mitochondrion</keyword>
<keyword id="KW-0945">Host-virus interaction</keyword>
<keyword id="KW-1090">Inhibition of host innate immune response by virus</keyword>
<keyword id="KW-0694">RNA-binding</keyword>
<keyword id="KW-0941">Suppressor of RNA silencing</keyword>
<keyword id="KW-0899">Viral immunoevasion</keyword>
<proteinExistence type="evidence at protein level"/>
<feature type="chain" id="PRO_0000222454" description="Protein B2">
    <location>
        <begin position="1"/>
        <end position="106"/>
    </location>
</feature>
<feature type="region of interest" description="RNA-binding">
    <location>
        <begin position="1"/>
        <end position="73"/>
    </location>
</feature>
<feature type="helix" evidence="9">
    <location>
        <begin position="4"/>
        <end position="9"/>
    </location>
</feature>
<feature type="helix" evidence="9">
    <location>
        <begin position="11"/>
        <end position="20"/>
    </location>
</feature>
<feature type="helix" evidence="9">
    <location>
        <begin position="22"/>
        <end position="24"/>
    </location>
</feature>
<feature type="strand" evidence="9">
    <location>
        <begin position="28"/>
        <end position="30"/>
    </location>
</feature>
<feature type="helix" evidence="9">
    <location>
        <begin position="32"/>
        <end position="59"/>
    </location>
</feature>
<feature type="helix" evidence="9">
    <location>
        <begin position="63"/>
        <end position="70"/>
    </location>
</feature>
<organism>
    <name type="scientific">Flock house virus</name>
    <name type="common">FHV</name>
    <dbReference type="NCBI Taxonomy" id="12287"/>
    <lineage>
        <taxon>Viruses</taxon>
        <taxon>Riboviria</taxon>
        <taxon>Orthornavirae</taxon>
        <taxon>Kitrinoviricota</taxon>
        <taxon>Magsaviricetes</taxon>
        <taxon>Nodamuvirales</taxon>
        <taxon>Nodaviridae</taxon>
        <taxon>Alphanodavirus</taxon>
    </lineage>
</organism>
<evidence type="ECO:0000269" key="1">
    <source>
    </source>
</evidence>
<evidence type="ECO:0000269" key="2">
    <source>
    </source>
</evidence>
<evidence type="ECO:0000269" key="3">
    <source>
    </source>
</evidence>
<evidence type="ECO:0000269" key="4">
    <source>
    </source>
</evidence>
<evidence type="ECO:0000305" key="5"/>
<evidence type="ECO:0007744" key="6">
    <source>
        <dbReference type="PDB" id="2AZ0"/>
    </source>
</evidence>
<evidence type="ECO:0007744" key="7">
    <source>
        <dbReference type="PDB" id="2AZ2"/>
    </source>
</evidence>
<evidence type="ECO:0007744" key="8">
    <source>
        <dbReference type="PDB" id="2B9Z"/>
    </source>
</evidence>
<evidence type="ECO:0007829" key="9">
    <source>
        <dbReference type="PDB" id="2AZ0"/>
    </source>
</evidence>